<evidence type="ECO:0000250" key="1"/>
<evidence type="ECO:0000250" key="2">
    <source>
        <dbReference type="UniProtKB" id="P37173"/>
    </source>
</evidence>
<evidence type="ECO:0000255" key="3"/>
<evidence type="ECO:0000255" key="4">
    <source>
        <dbReference type="PROSITE-ProRule" id="PRU00159"/>
    </source>
</evidence>
<evidence type="ECO:0000305" key="5"/>
<proteinExistence type="inferred from homology"/>
<accession>P38551</accession>
<feature type="signal peptide" evidence="3">
    <location>
        <begin position="1"/>
        <end position="23"/>
    </location>
</feature>
<feature type="chain" id="PRO_0000024428" description="TGF-beta receptor type-2">
    <location>
        <begin position="24"/>
        <end position="297" status="greater than"/>
    </location>
</feature>
<feature type="topological domain" description="Extracellular" evidence="3">
    <location>
        <begin position="24"/>
        <end position="166"/>
    </location>
</feature>
<feature type="transmembrane region" description="Helical" evidence="3">
    <location>
        <begin position="167"/>
        <end position="187"/>
    </location>
</feature>
<feature type="topological domain" description="Cytoplasmic" evidence="3">
    <location>
        <begin position="188"/>
        <end position="297" status="greater than"/>
    </location>
</feature>
<feature type="domain" description="Protein kinase" evidence="4">
    <location>
        <begin position="244"/>
        <end position="297" status="greater than"/>
    </location>
</feature>
<feature type="binding site" evidence="4">
    <location>
        <begin position="250"/>
        <end position="258"/>
    </location>
    <ligand>
        <name>ATP</name>
        <dbReference type="ChEBI" id="CHEBI:30616"/>
    </ligand>
</feature>
<feature type="binding site" evidence="4">
    <location>
        <position position="277"/>
    </location>
    <ligand>
        <name>ATP</name>
        <dbReference type="ChEBI" id="CHEBI:30616"/>
    </ligand>
</feature>
<feature type="glycosylation site" description="N-linked (GlcNAc...) asparagine" evidence="3">
    <location>
        <position position="70"/>
    </location>
</feature>
<feature type="glycosylation site" description="N-linked (GlcNAc...) asparagine" evidence="3">
    <location>
        <position position="94"/>
    </location>
</feature>
<feature type="disulfide bond" evidence="2">
    <location>
        <begin position="51"/>
        <end position="84"/>
    </location>
</feature>
<feature type="disulfide bond" evidence="2">
    <location>
        <begin position="54"/>
        <end position="71"/>
    </location>
</feature>
<feature type="disulfide bond" evidence="2">
    <location>
        <begin position="61"/>
        <end position="67"/>
    </location>
</feature>
<feature type="disulfide bond" evidence="2">
    <location>
        <begin position="77"/>
        <end position="101"/>
    </location>
</feature>
<feature type="disulfide bond" evidence="2">
    <location>
        <begin position="121"/>
        <end position="136"/>
    </location>
</feature>
<feature type="disulfide bond" evidence="2">
    <location>
        <begin position="138"/>
        <end position="143"/>
    </location>
</feature>
<feature type="non-terminal residue">
    <location>
        <position position="297"/>
    </location>
</feature>
<comment type="function">
    <text evidence="2">Transmembrane serine/threonine kinase forming with the TGF-beta type I serine/threonine kinase receptor, TGFBR1, the non-promiscuous receptor for the TGF-beta cytokines TGFB1, TGFB2 and TGFB3. Transduces the TGFB1, TGFB2 and TGFB3 signal from the cell surface to the cytoplasm and is thus regulating a plethora of physiological and pathological processes including cell cycle arrest in epithelial and hematopoietic cells, control of mesenchymal cell proliferation and differentiation, wound healing, extracellular matrix production, immunosuppression and carcinogenesis. The formation of the receptor complex composed of 2 TGFBR1 and 2 TGFBR2 molecules symmetrically bound to the cytokine dimer results in the phosphorylation and the activation of TGFRB1 by the constitutively active TGFBR2. Activated TGFBR1 phosphorylates SMAD2 which dissociates from the receptor and interacts with SMAD4. The SMAD2-SMAD4 complex is subsequently translocated to the nucleus where it modulates the transcription of the TGF-beta-regulated genes. This constitutes the canonical SMAD-dependent TGF-beta signaling cascade. Also involved in non-canonical, SMAD-independent TGF-beta signaling pathways (By similarity).</text>
</comment>
<comment type="catalytic activity">
    <reaction>
        <text>L-threonyl-[receptor-protein] + ATP = O-phospho-L-threonyl-[receptor-protein] + ADP + H(+)</text>
        <dbReference type="Rhea" id="RHEA:44880"/>
        <dbReference type="Rhea" id="RHEA-COMP:11024"/>
        <dbReference type="Rhea" id="RHEA-COMP:11025"/>
        <dbReference type="ChEBI" id="CHEBI:15378"/>
        <dbReference type="ChEBI" id="CHEBI:30013"/>
        <dbReference type="ChEBI" id="CHEBI:30616"/>
        <dbReference type="ChEBI" id="CHEBI:61977"/>
        <dbReference type="ChEBI" id="CHEBI:456216"/>
        <dbReference type="EC" id="2.7.11.30"/>
    </reaction>
</comment>
<comment type="catalytic activity">
    <reaction>
        <text>L-seryl-[receptor-protein] + ATP = O-phospho-L-seryl-[receptor-protein] + ADP + H(+)</text>
        <dbReference type="Rhea" id="RHEA:18673"/>
        <dbReference type="Rhea" id="RHEA-COMP:11022"/>
        <dbReference type="Rhea" id="RHEA-COMP:11023"/>
        <dbReference type="ChEBI" id="CHEBI:15378"/>
        <dbReference type="ChEBI" id="CHEBI:29999"/>
        <dbReference type="ChEBI" id="CHEBI:30616"/>
        <dbReference type="ChEBI" id="CHEBI:83421"/>
        <dbReference type="ChEBI" id="CHEBI:456216"/>
        <dbReference type="EC" id="2.7.11.30"/>
    </reaction>
</comment>
<comment type="cofactor">
    <cofactor evidence="1">
        <name>Mg(2+)</name>
        <dbReference type="ChEBI" id="CHEBI:18420"/>
    </cofactor>
    <cofactor evidence="1">
        <name>Mn(2+)</name>
        <dbReference type="ChEBI" id="CHEBI:29035"/>
    </cofactor>
</comment>
<comment type="subunit">
    <text evidence="2">Homodimer. Heterohexamer; TGFB1, TGFB2 and TGFB3 homodimeric ligands assemble a functional receptor composed of two TGFBR1 and TGFBR2 heterodimers to form a ligand-receptor heterohexamer. The respective affinity of TGFRB1 and TGFRB2 for the ligands may modulate the kinetics of assembly of the receptor and may explain the different biological activities of TGFB1, TGFB2 and TGFB3. Component of a complex composed of TSC22D1 (via N-terminus), TGFBR1 and TGFBR2; the interaction between TSC22D1 and TGFBR1 is inhibited by SMAD7 and promoted by TGFB1 (By similarity). Interacts with DAXX. Interacts with DYNLT4. Interacts with ZFYVE9; ZFYVE9 recruits SMAD2 and SMAD3 to the TGF-beta receptor (By similarity). Interacts with and is activated by SCUBE3; this interaction does not affect TGFB1-binding to TGFBR2 (By similarity). Interacts with VPS39; this interaction is independent of the receptor kinase activity and of the presence of TGF-beta (By similarity). Interacts with CLU (By similarity).</text>
</comment>
<comment type="subcellular location">
    <subcellularLocation>
        <location evidence="2">Cell membrane</location>
        <topology evidence="2">Single-pass type I membrane protein</topology>
    </subcellularLocation>
    <subcellularLocation>
        <location evidence="2">Membrane raft</location>
    </subcellularLocation>
</comment>
<comment type="PTM">
    <text>Phosphorylated on a Ser/Thr residue in the cytoplasmic domain.</text>
</comment>
<comment type="similarity">
    <text evidence="5">Belongs to the protein kinase superfamily. TKL Ser/Thr protein kinase family. TGFB receptor subfamily.</text>
</comment>
<reference key="1">
    <citation type="journal article" date="1992" name="Cell">
        <title>Expression cloning of the TGF-beta type II receptor, a functional transmembrane serine/threonine kinase.</title>
        <authorList>
            <person name="Lin H.Y."/>
            <person name="Wang X.-F."/>
            <person name="Ng-Eaton E."/>
            <person name="Weinberg R.A."/>
            <person name="Lodish H.F."/>
        </authorList>
    </citation>
    <scope>NUCLEOTIDE SEQUENCE</scope>
</reference>
<dbReference type="EC" id="2.7.11.30"/>
<dbReference type="SMR" id="P38551"/>
<dbReference type="STRING" id="9823.ENSSSCP00000028622"/>
<dbReference type="GlyCosmos" id="P38551">
    <property type="glycosylation" value="2 sites, No reported glycans"/>
</dbReference>
<dbReference type="GlyGen" id="P38551">
    <property type="glycosylation" value="2 sites"/>
</dbReference>
<dbReference type="PaxDb" id="9823-ENSSSCP00000028622"/>
<dbReference type="eggNOG" id="KOG3653">
    <property type="taxonomic scope" value="Eukaryota"/>
</dbReference>
<dbReference type="InParanoid" id="P38551"/>
<dbReference type="Proteomes" id="UP000008227">
    <property type="component" value="Unplaced"/>
</dbReference>
<dbReference type="Proteomes" id="UP000314985">
    <property type="component" value="Unplaced"/>
</dbReference>
<dbReference type="Proteomes" id="UP000694570">
    <property type="component" value="Unplaced"/>
</dbReference>
<dbReference type="Proteomes" id="UP000694571">
    <property type="component" value="Unplaced"/>
</dbReference>
<dbReference type="Proteomes" id="UP000694720">
    <property type="component" value="Unplaced"/>
</dbReference>
<dbReference type="Proteomes" id="UP000694722">
    <property type="component" value="Unplaced"/>
</dbReference>
<dbReference type="Proteomes" id="UP000694723">
    <property type="component" value="Unplaced"/>
</dbReference>
<dbReference type="Proteomes" id="UP000694724">
    <property type="component" value="Unplaced"/>
</dbReference>
<dbReference type="Proteomes" id="UP000694725">
    <property type="component" value="Unplaced"/>
</dbReference>
<dbReference type="Proteomes" id="UP000694726">
    <property type="component" value="Unplaced"/>
</dbReference>
<dbReference type="Proteomes" id="UP000694727">
    <property type="component" value="Unplaced"/>
</dbReference>
<dbReference type="Proteomes" id="UP000694728">
    <property type="component" value="Unplaced"/>
</dbReference>
<dbReference type="GO" id="GO:0048179">
    <property type="term" value="C:activin receptor complex"/>
    <property type="evidence" value="ECO:0000318"/>
    <property type="project" value="GO_Central"/>
</dbReference>
<dbReference type="GO" id="GO:0045121">
    <property type="term" value="C:membrane raft"/>
    <property type="evidence" value="ECO:0000250"/>
    <property type="project" value="UniProtKB"/>
</dbReference>
<dbReference type="GO" id="GO:0005886">
    <property type="term" value="C:plasma membrane"/>
    <property type="evidence" value="ECO:0000250"/>
    <property type="project" value="UniProtKB"/>
</dbReference>
<dbReference type="GO" id="GO:0048185">
    <property type="term" value="F:activin binding"/>
    <property type="evidence" value="ECO:0000318"/>
    <property type="project" value="GO_Central"/>
</dbReference>
<dbReference type="GO" id="GO:0016361">
    <property type="term" value="F:activin receptor activity, type I"/>
    <property type="evidence" value="ECO:0000318"/>
    <property type="project" value="GO_Central"/>
</dbReference>
<dbReference type="GO" id="GO:0005524">
    <property type="term" value="F:ATP binding"/>
    <property type="evidence" value="ECO:0007669"/>
    <property type="project" value="UniProtKB-KW"/>
</dbReference>
<dbReference type="GO" id="GO:0046872">
    <property type="term" value="F:metal ion binding"/>
    <property type="evidence" value="ECO:0007669"/>
    <property type="project" value="UniProtKB-KW"/>
</dbReference>
<dbReference type="GO" id="GO:0050431">
    <property type="term" value="F:transforming growth factor beta binding"/>
    <property type="evidence" value="ECO:0000318"/>
    <property type="project" value="GO_Central"/>
</dbReference>
<dbReference type="GO" id="GO:0005024">
    <property type="term" value="F:transforming growth factor beta receptor activity"/>
    <property type="evidence" value="ECO:0000318"/>
    <property type="project" value="GO_Central"/>
</dbReference>
<dbReference type="GO" id="GO:0005026">
    <property type="term" value="F:transforming growth factor beta receptor activity, type II"/>
    <property type="evidence" value="ECO:0007669"/>
    <property type="project" value="InterPro"/>
</dbReference>
<dbReference type="GO" id="GO:0034713">
    <property type="term" value="F:type I transforming growth factor beta receptor binding"/>
    <property type="evidence" value="ECO:0000318"/>
    <property type="project" value="GO_Central"/>
</dbReference>
<dbReference type="GO" id="GO:0032924">
    <property type="term" value="P:activin receptor signaling pathway"/>
    <property type="evidence" value="ECO:0000318"/>
    <property type="project" value="GO_Central"/>
</dbReference>
<dbReference type="GO" id="GO:0006915">
    <property type="term" value="P:apoptotic process"/>
    <property type="evidence" value="ECO:0007669"/>
    <property type="project" value="UniProtKB-KW"/>
</dbReference>
<dbReference type="GO" id="GO:0030154">
    <property type="term" value="P:cell differentiation"/>
    <property type="evidence" value="ECO:0007669"/>
    <property type="project" value="UniProtKB-KW"/>
</dbReference>
<dbReference type="GO" id="GO:0071363">
    <property type="term" value="P:cellular response to growth factor stimulus"/>
    <property type="evidence" value="ECO:0000318"/>
    <property type="project" value="GO_Central"/>
</dbReference>
<dbReference type="GO" id="GO:0007507">
    <property type="term" value="P:heart development"/>
    <property type="evidence" value="ECO:0000318"/>
    <property type="project" value="GO_Central"/>
</dbReference>
<dbReference type="GO" id="GO:0007399">
    <property type="term" value="P:nervous system development"/>
    <property type="evidence" value="ECO:0000318"/>
    <property type="project" value="GO_Central"/>
</dbReference>
<dbReference type="CDD" id="cd23538">
    <property type="entry name" value="TFP_LU_ECD_TGFR2"/>
    <property type="match status" value="1"/>
</dbReference>
<dbReference type="FunFam" id="2.10.60.10:FF:000009">
    <property type="entry name" value="TGF-beta receptor type-2"/>
    <property type="match status" value="1"/>
</dbReference>
<dbReference type="Gene3D" id="2.10.60.10">
    <property type="entry name" value="CD59"/>
    <property type="match status" value="1"/>
</dbReference>
<dbReference type="Gene3D" id="3.30.200.20">
    <property type="entry name" value="Phosphorylase Kinase, domain 1"/>
    <property type="match status" value="1"/>
</dbReference>
<dbReference type="InterPro" id="IPR011009">
    <property type="entry name" value="Kinase-like_dom_sf"/>
</dbReference>
<dbReference type="InterPro" id="IPR000719">
    <property type="entry name" value="Prot_kinase_dom"/>
</dbReference>
<dbReference type="InterPro" id="IPR017441">
    <property type="entry name" value="Protein_kinase_ATP_BS"/>
</dbReference>
<dbReference type="InterPro" id="IPR045860">
    <property type="entry name" value="Snake_toxin-like_sf"/>
</dbReference>
<dbReference type="InterPro" id="IPR000333">
    <property type="entry name" value="TGFB_receptor"/>
</dbReference>
<dbReference type="InterPro" id="IPR015013">
    <property type="entry name" value="Transforming_GF_b_rcpt_2_ecto"/>
</dbReference>
<dbReference type="PANTHER" id="PTHR23255:SF55">
    <property type="entry name" value="TGF-BETA RECEPTOR TYPE-2"/>
    <property type="match status" value="1"/>
</dbReference>
<dbReference type="PANTHER" id="PTHR23255">
    <property type="entry name" value="TRANSFORMING GROWTH FACTOR-BETA RECEPTOR TYPE I AND II"/>
    <property type="match status" value="1"/>
</dbReference>
<dbReference type="Pfam" id="PF08917">
    <property type="entry name" value="ecTbetaR2"/>
    <property type="match status" value="1"/>
</dbReference>
<dbReference type="SUPFAM" id="SSF56112">
    <property type="entry name" value="Protein kinase-like (PK-like)"/>
    <property type="match status" value="1"/>
</dbReference>
<dbReference type="SUPFAM" id="SSF57302">
    <property type="entry name" value="Snake toxin-like"/>
    <property type="match status" value="1"/>
</dbReference>
<dbReference type="PROSITE" id="PS00107">
    <property type="entry name" value="PROTEIN_KINASE_ATP"/>
    <property type="match status" value="1"/>
</dbReference>
<dbReference type="PROSITE" id="PS50011">
    <property type="entry name" value="PROTEIN_KINASE_DOM"/>
    <property type="match status" value="1"/>
</dbReference>
<gene>
    <name type="primary">TGFBR2</name>
</gene>
<organism>
    <name type="scientific">Sus scrofa</name>
    <name type="common">Pig</name>
    <dbReference type="NCBI Taxonomy" id="9823"/>
    <lineage>
        <taxon>Eukaryota</taxon>
        <taxon>Metazoa</taxon>
        <taxon>Chordata</taxon>
        <taxon>Craniata</taxon>
        <taxon>Vertebrata</taxon>
        <taxon>Euteleostomi</taxon>
        <taxon>Mammalia</taxon>
        <taxon>Eutheria</taxon>
        <taxon>Laurasiatheria</taxon>
        <taxon>Artiodactyla</taxon>
        <taxon>Suina</taxon>
        <taxon>Suidae</taxon>
        <taxon>Sus</taxon>
    </lineage>
</organism>
<sequence>MGRGLLGGLWPLHVVLWTRIASTIPPHVPKSVNSDMMVTDSNGAVKLPQLCKFCDVRSSTCDNQKSCLSNCSITAICEKPQEVCVAVWRKNDENITIETVCDDPKIAYHGFVLDDAASSKCIMKERKGSGETFFMCSCSSDECNDHIIFSEEYATNNPDLLLVIFQVTGVSLLPPLGIAIAVIITFYCYRVHRQQKLSPSWDSGKPRKLMEFSEHLAIILEDDRSDISSTCANNINHNTELLPIELDTLVGKGRFAEVYKAKLRQNTSEQFETVAVKIFPYEEYASWKTEKDIFSDL</sequence>
<name>TGFR2_PIG</name>
<keyword id="KW-0053">Apoptosis</keyword>
<keyword id="KW-0067">ATP-binding</keyword>
<keyword id="KW-1003">Cell membrane</keyword>
<keyword id="KW-0221">Differentiation</keyword>
<keyword id="KW-1015">Disulfide bond</keyword>
<keyword id="KW-0325">Glycoprotein</keyword>
<keyword id="KW-0341">Growth regulation</keyword>
<keyword id="KW-0418">Kinase</keyword>
<keyword id="KW-0460">Magnesium</keyword>
<keyword id="KW-0464">Manganese</keyword>
<keyword id="KW-0472">Membrane</keyword>
<keyword id="KW-0479">Metal-binding</keyword>
<keyword id="KW-0547">Nucleotide-binding</keyword>
<keyword id="KW-0597">Phosphoprotein</keyword>
<keyword id="KW-0675">Receptor</keyword>
<keyword id="KW-1185">Reference proteome</keyword>
<keyword id="KW-0723">Serine/threonine-protein kinase</keyword>
<keyword id="KW-0732">Signal</keyword>
<keyword id="KW-0808">Transferase</keyword>
<keyword id="KW-0812">Transmembrane</keyword>
<keyword id="KW-1133">Transmembrane helix</keyword>
<protein>
    <recommendedName>
        <fullName>TGF-beta receptor type-2</fullName>
        <shortName>TGFR-2</shortName>
        <ecNumber>2.7.11.30</ecNumber>
    </recommendedName>
    <alternativeName>
        <fullName>TGF-beta type II receptor</fullName>
    </alternativeName>
    <alternativeName>
        <fullName>Transforming growth factor-beta receptor type II</fullName>
        <shortName>TGF-beta receptor type II</shortName>
        <shortName>TbetaR-II</shortName>
    </alternativeName>
</protein>